<protein>
    <recommendedName>
        <fullName evidence="1">Biotin synthase</fullName>
        <ecNumber evidence="1">2.8.1.6</ecNumber>
    </recommendedName>
</protein>
<name>BIOB_SYNR3</name>
<evidence type="ECO:0000255" key="1">
    <source>
        <dbReference type="HAMAP-Rule" id="MF_01694"/>
    </source>
</evidence>
<evidence type="ECO:0000255" key="2">
    <source>
        <dbReference type="PROSITE-ProRule" id="PRU01266"/>
    </source>
</evidence>
<gene>
    <name evidence="1" type="primary">bioB</name>
    <name type="ordered locus">SynRCC307_0793</name>
</gene>
<proteinExistence type="inferred from homology"/>
<accession>A5GS37</accession>
<comment type="function">
    <text evidence="1">Catalyzes the conversion of dethiobiotin (DTB) to biotin by the insertion of a sulfur atom into dethiobiotin via a radical-based mechanism.</text>
</comment>
<comment type="catalytic activity">
    <reaction evidence="1">
        <text>(4R,5S)-dethiobiotin + (sulfur carrier)-SH + 2 reduced [2Fe-2S]-[ferredoxin] + 2 S-adenosyl-L-methionine = (sulfur carrier)-H + biotin + 2 5'-deoxyadenosine + 2 L-methionine + 2 oxidized [2Fe-2S]-[ferredoxin]</text>
        <dbReference type="Rhea" id="RHEA:22060"/>
        <dbReference type="Rhea" id="RHEA-COMP:10000"/>
        <dbReference type="Rhea" id="RHEA-COMP:10001"/>
        <dbReference type="Rhea" id="RHEA-COMP:14737"/>
        <dbReference type="Rhea" id="RHEA-COMP:14739"/>
        <dbReference type="ChEBI" id="CHEBI:17319"/>
        <dbReference type="ChEBI" id="CHEBI:29917"/>
        <dbReference type="ChEBI" id="CHEBI:33737"/>
        <dbReference type="ChEBI" id="CHEBI:33738"/>
        <dbReference type="ChEBI" id="CHEBI:57586"/>
        <dbReference type="ChEBI" id="CHEBI:57844"/>
        <dbReference type="ChEBI" id="CHEBI:59789"/>
        <dbReference type="ChEBI" id="CHEBI:64428"/>
        <dbReference type="ChEBI" id="CHEBI:149473"/>
        <dbReference type="EC" id="2.8.1.6"/>
    </reaction>
</comment>
<comment type="cofactor">
    <cofactor evidence="1">
        <name>[4Fe-4S] cluster</name>
        <dbReference type="ChEBI" id="CHEBI:49883"/>
    </cofactor>
    <text evidence="1">Binds 1 [4Fe-4S] cluster. The cluster is coordinated with 3 cysteines and an exchangeable S-adenosyl-L-methionine.</text>
</comment>
<comment type="cofactor">
    <cofactor evidence="1">
        <name>[2Fe-2S] cluster</name>
        <dbReference type="ChEBI" id="CHEBI:190135"/>
    </cofactor>
    <text evidence="1">Binds 1 [2Fe-2S] cluster. The cluster is coordinated with 3 cysteines and 1 arginine.</text>
</comment>
<comment type="pathway">
    <text evidence="1">Cofactor biosynthesis; biotin biosynthesis; biotin from 7,8-diaminononanoate: step 2/2.</text>
</comment>
<comment type="subunit">
    <text evidence="1">Homodimer.</text>
</comment>
<comment type="similarity">
    <text evidence="1">Belongs to the radical SAM superfamily. Biotin synthase family.</text>
</comment>
<feature type="chain" id="PRO_0000381679" description="Biotin synthase">
    <location>
        <begin position="1"/>
        <end position="326"/>
    </location>
</feature>
<feature type="domain" description="Radical SAM core" evidence="2">
    <location>
        <begin position="41"/>
        <end position="271"/>
    </location>
</feature>
<feature type="binding site" evidence="1">
    <location>
        <position position="56"/>
    </location>
    <ligand>
        <name>[4Fe-4S] cluster</name>
        <dbReference type="ChEBI" id="CHEBI:49883"/>
        <note>4Fe-4S-S-AdoMet</note>
    </ligand>
</feature>
<feature type="binding site" evidence="1">
    <location>
        <position position="60"/>
    </location>
    <ligand>
        <name>[4Fe-4S] cluster</name>
        <dbReference type="ChEBI" id="CHEBI:49883"/>
        <note>4Fe-4S-S-AdoMet</note>
    </ligand>
</feature>
<feature type="binding site" evidence="1">
    <location>
        <position position="63"/>
    </location>
    <ligand>
        <name>[4Fe-4S] cluster</name>
        <dbReference type="ChEBI" id="CHEBI:49883"/>
        <note>4Fe-4S-S-AdoMet</note>
    </ligand>
</feature>
<feature type="binding site" evidence="1">
    <location>
        <position position="102"/>
    </location>
    <ligand>
        <name>[2Fe-2S] cluster</name>
        <dbReference type="ChEBI" id="CHEBI:190135"/>
    </ligand>
</feature>
<feature type="binding site" evidence="1">
    <location>
        <position position="134"/>
    </location>
    <ligand>
        <name>[2Fe-2S] cluster</name>
        <dbReference type="ChEBI" id="CHEBI:190135"/>
    </ligand>
</feature>
<feature type="binding site" evidence="1">
    <location>
        <position position="194"/>
    </location>
    <ligand>
        <name>[2Fe-2S] cluster</name>
        <dbReference type="ChEBI" id="CHEBI:190135"/>
    </ligand>
</feature>
<feature type="binding site" evidence="1">
    <location>
        <position position="266"/>
    </location>
    <ligand>
        <name>[2Fe-2S] cluster</name>
        <dbReference type="ChEBI" id="CHEBI:190135"/>
    </ligand>
</feature>
<organism>
    <name type="scientific">Synechococcus sp. (strain RCC307)</name>
    <dbReference type="NCBI Taxonomy" id="316278"/>
    <lineage>
        <taxon>Bacteria</taxon>
        <taxon>Bacillati</taxon>
        <taxon>Cyanobacteriota</taxon>
        <taxon>Cyanophyceae</taxon>
        <taxon>Synechococcales</taxon>
        <taxon>Synechococcaceae</taxon>
        <taxon>Synechococcus</taxon>
    </lineage>
</organism>
<keyword id="KW-0001">2Fe-2S</keyword>
<keyword id="KW-0004">4Fe-4S</keyword>
<keyword id="KW-0093">Biotin biosynthesis</keyword>
<keyword id="KW-0408">Iron</keyword>
<keyword id="KW-0411">Iron-sulfur</keyword>
<keyword id="KW-0479">Metal-binding</keyword>
<keyword id="KW-1185">Reference proteome</keyword>
<keyword id="KW-0949">S-adenosyl-L-methionine</keyword>
<keyword id="KW-0808">Transferase</keyword>
<reference key="1">
    <citation type="submission" date="2006-05" db="EMBL/GenBank/DDBJ databases">
        <authorList>
            <consortium name="Genoscope"/>
        </authorList>
    </citation>
    <scope>NUCLEOTIDE SEQUENCE [LARGE SCALE GENOMIC DNA]</scope>
    <source>
        <strain>RCC307</strain>
    </source>
</reference>
<sequence>MSALIRHDWDLAEIEALLELPLVDLLWHAQQVHRDAHPAGYHVQLASLLSVKTGGCEEDCAYCPQSMHHSSDVTAQPELQLQVDGVLQQARSARDAGAHRFCMGWAWREIREGAPFDAMLAMVRGVRELGMEACVTAGMLTDSQAERLAQAGLTSYNHNLDTSPEHYDQIISTRTYQERLDTLQRARDAGLSLCCGGIIGMGESRRDRASLLQVLAGLNPHPESVPINGLVAVEGTPLEDQEPWEPLELVRMVAVARILMPEARVRLSAGRERLSQEAQILCLLAGADSIFYGDSLLTTSNPAVQADQALLAAAGVSSSLEGVAAA</sequence>
<dbReference type="EC" id="2.8.1.6" evidence="1"/>
<dbReference type="EMBL" id="CT978603">
    <property type="protein sequence ID" value="CAK27696.1"/>
    <property type="molecule type" value="Genomic_DNA"/>
</dbReference>
<dbReference type="SMR" id="A5GS37"/>
<dbReference type="STRING" id="316278.SynRCC307_0793"/>
<dbReference type="KEGG" id="syr:SynRCC307_0793"/>
<dbReference type="eggNOG" id="COG0502">
    <property type="taxonomic scope" value="Bacteria"/>
</dbReference>
<dbReference type="HOGENOM" id="CLU_033172_1_2_3"/>
<dbReference type="OrthoDB" id="9786826at2"/>
<dbReference type="UniPathway" id="UPA00078">
    <property type="reaction ID" value="UER00162"/>
</dbReference>
<dbReference type="Proteomes" id="UP000001115">
    <property type="component" value="Chromosome"/>
</dbReference>
<dbReference type="GO" id="GO:0051537">
    <property type="term" value="F:2 iron, 2 sulfur cluster binding"/>
    <property type="evidence" value="ECO:0007669"/>
    <property type="project" value="UniProtKB-KW"/>
</dbReference>
<dbReference type="GO" id="GO:0051539">
    <property type="term" value="F:4 iron, 4 sulfur cluster binding"/>
    <property type="evidence" value="ECO:0007669"/>
    <property type="project" value="UniProtKB-KW"/>
</dbReference>
<dbReference type="GO" id="GO:0004076">
    <property type="term" value="F:biotin synthase activity"/>
    <property type="evidence" value="ECO:0007669"/>
    <property type="project" value="UniProtKB-UniRule"/>
</dbReference>
<dbReference type="GO" id="GO:0005506">
    <property type="term" value="F:iron ion binding"/>
    <property type="evidence" value="ECO:0007669"/>
    <property type="project" value="UniProtKB-UniRule"/>
</dbReference>
<dbReference type="GO" id="GO:0009102">
    <property type="term" value="P:biotin biosynthetic process"/>
    <property type="evidence" value="ECO:0007669"/>
    <property type="project" value="UniProtKB-UniRule"/>
</dbReference>
<dbReference type="CDD" id="cd01335">
    <property type="entry name" value="Radical_SAM"/>
    <property type="match status" value="1"/>
</dbReference>
<dbReference type="Gene3D" id="3.20.20.70">
    <property type="entry name" value="Aldolase class I"/>
    <property type="match status" value="1"/>
</dbReference>
<dbReference type="HAMAP" id="MF_01694">
    <property type="entry name" value="BioB"/>
    <property type="match status" value="1"/>
</dbReference>
<dbReference type="InterPro" id="IPR013785">
    <property type="entry name" value="Aldolase_TIM"/>
</dbReference>
<dbReference type="InterPro" id="IPR010722">
    <property type="entry name" value="BATS_dom"/>
</dbReference>
<dbReference type="InterPro" id="IPR002684">
    <property type="entry name" value="Biotin_synth/BioAB"/>
</dbReference>
<dbReference type="InterPro" id="IPR024177">
    <property type="entry name" value="Biotin_synthase"/>
</dbReference>
<dbReference type="InterPro" id="IPR006638">
    <property type="entry name" value="Elp3/MiaA/NifB-like_rSAM"/>
</dbReference>
<dbReference type="InterPro" id="IPR007197">
    <property type="entry name" value="rSAM"/>
</dbReference>
<dbReference type="NCBIfam" id="TIGR00433">
    <property type="entry name" value="bioB"/>
    <property type="match status" value="1"/>
</dbReference>
<dbReference type="PANTHER" id="PTHR22976">
    <property type="entry name" value="BIOTIN SYNTHASE"/>
    <property type="match status" value="1"/>
</dbReference>
<dbReference type="PANTHER" id="PTHR22976:SF2">
    <property type="entry name" value="BIOTIN SYNTHASE, MITOCHONDRIAL"/>
    <property type="match status" value="1"/>
</dbReference>
<dbReference type="Pfam" id="PF06968">
    <property type="entry name" value="BATS"/>
    <property type="match status" value="1"/>
</dbReference>
<dbReference type="Pfam" id="PF04055">
    <property type="entry name" value="Radical_SAM"/>
    <property type="match status" value="1"/>
</dbReference>
<dbReference type="PIRSF" id="PIRSF001619">
    <property type="entry name" value="Biotin_synth"/>
    <property type="match status" value="1"/>
</dbReference>
<dbReference type="SFLD" id="SFLDF00272">
    <property type="entry name" value="biotin_synthase"/>
    <property type="match status" value="1"/>
</dbReference>
<dbReference type="SFLD" id="SFLDG01278">
    <property type="entry name" value="biotin_synthase_like"/>
    <property type="match status" value="1"/>
</dbReference>
<dbReference type="SMART" id="SM00876">
    <property type="entry name" value="BATS"/>
    <property type="match status" value="1"/>
</dbReference>
<dbReference type="SMART" id="SM00729">
    <property type="entry name" value="Elp3"/>
    <property type="match status" value="1"/>
</dbReference>
<dbReference type="SUPFAM" id="SSF102114">
    <property type="entry name" value="Radical SAM enzymes"/>
    <property type="match status" value="1"/>
</dbReference>
<dbReference type="PROSITE" id="PS51918">
    <property type="entry name" value="RADICAL_SAM"/>
    <property type="match status" value="1"/>
</dbReference>